<comment type="function">
    <text evidence="1">One of the primary rRNA binding proteins, it binds directly to 16S rRNA where it nucleates assembly of the body of the 30S subunit.</text>
</comment>
<comment type="function">
    <text evidence="1">With S5 and S12 plays an important role in translational accuracy.</text>
</comment>
<comment type="subunit">
    <text evidence="1">Part of the 30S ribosomal subunit. Contacts protein S5. The interaction surface between S4 and S5 is involved in control of translational fidelity.</text>
</comment>
<comment type="similarity">
    <text evidence="1">Belongs to the universal ribosomal protein uS4 family.</text>
</comment>
<accession>Q73S44</accession>
<keyword id="KW-1185">Reference proteome</keyword>
<keyword id="KW-0687">Ribonucleoprotein</keyword>
<keyword id="KW-0689">Ribosomal protein</keyword>
<keyword id="KW-0694">RNA-binding</keyword>
<keyword id="KW-0699">rRNA-binding</keyword>
<feature type="chain" id="PRO_0000132417" description="Small ribosomal subunit protein uS4">
    <location>
        <begin position="1"/>
        <end position="201"/>
    </location>
</feature>
<feature type="domain" description="S4 RNA-binding" evidence="1">
    <location>
        <begin position="91"/>
        <end position="157"/>
    </location>
</feature>
<gene>
    <name evidence="1" type="primary">rpsD</name>
    <name type="ordered locus">MAP_4232</name>
</gene>
<protein>
    <recommendedName>
        <fullName evidence="1">Small ribosomal subunit protein uS4</fullName>
    </recommendedName>
    <alternativeName>
        <fullName evidence="2">30S ribosomal protein S4</fullName>
    </alternativeName>
</protein>
<reference key="1">
    <citation type="journal article" date="2005" name="Proc. Natl. Acad. Sci. U.S.A.">
        <title>The complete genome sequence of Mycobacterium avium subspecies paratuberculosis.</title>
        <authorList>
            <person name="Li L."/>
            <person name="Bannantine J.P."/>
            <person name="Zhang Q."/>
            <person name="Amonsin A."/>
            <person name="May B.J."/>
            <person name="Alt D."/>
            <person name="Banerji N."/>
            <person name="Kanjilal S."/>
            <person name="Kapur V."/>
        </authorList>
    </citation>
    <scope>NUCLEOTIDE SEQUENCE [LARGE SCALE GENOMIC DNA]</scope>
    <source>
        <strain>ATCC BAA-968 / K-10</strain>
    </source>
</reference>
<organism>
    <name type="scientific">Mycolicibacterium paratuberculosis (strain ATCC BAA-968 / K-10)</name>
    <name type="common">Mycobacterium paratuberculosis</name>
    <dbReference type="NCBI Taxonomy" id="262316"/>
    <lineage>
        <taxon>Bacteria</taxon>
        <taxon>Bacillati</taxon>
        <taxon>Actinomycetota</taxon>
        <taxon>Actinomycetes</taxon>
        <taxon>Mycobacteriales</taxon>
        <taxon>Mycobacteriaceae</taxon>
        <taxon>Mycobacterium</taxon>
        <taxon>Mycobacterium avium complex (MAC)</taxon>
    </lineage>
</organism>
<proteinExistence type="inferred from homology"/>
<dbReference type="EMBL" id="AE016958">
    <property type="protein sequence ID" value="AAS06782.1"/>
    <property type="molecule type" value="Genomic_DNA"/>
</dbReference>
<dbReference type="RefSeq" id="WP_003873444.1">
    <property type="nucleotide sequence ID" value="NZ_CP106873.1"/>
</dbReference>
<dbReference type="SMR" id="Q73S44"/>
<dbReference type="STRING" id="262316.MAP_4232"/>
<dbReference type="GeneID" id="75271913"/>
<dbReference type="KEGG" id="mpa:MAP_4232"/>
<dbReference type="eggNOG" id="COG0522">
    <property type="taxonomic scope" value="Bacteria"/>
</dbReference>
<dbReference type="HOGENOM" id="CLU_092403_0_2_11"/>
<dbReference type="Proteomes" id="UP000000580">
    <property type="component" value="Chromosome"/>
</dbReference>
<dbReference type="GO" id="GO:0015935">
    <property type="term" value="C:small ribosomal subunit"/>
    <property type="evidence" value="ECO:0007669"/>
    <property type="project" value="InterPro"/>
</dbReference>
<dbReference type="GO" id="GO:0019843">
    <property type="term" value="F:rRNA binding"/>
    <property type="evidence" value="ECO:0007669"/>
    <property type="project" value="UniProtKB-UniRule"/>
</dbReference>
<dbReference type="GO" id="GO:0003735">
    <property type="term" value="F:structural constituent of ribosome"/>
    <property type="evidence" value="ECO:0007669"/>
    <property type="project" value="InterPro"/>
</dbReference>
<dbReference type="GO" id="GO:0042274">
    <property type="term" value="P:ribosomal small subunit biogenesis"/>
    <property type="evidence" value="ECO:0007669"/>
    <property type="project" value="TreeGrafter"/>
</dbReference>
<dbReference type="GO" id="GO:0006412">
    <property type="term" value="P:translation"/>
    <property type="evidence" value="ECO:0007669"/>
    <property type="project" value="UniProtKB-UniRule"/>
</dbReference>
<dbReference type="CDD" id="cd00165">
    <property type="entry name" value="S4"/>
    <property type="match status" value="1"/>
</dbReference>
<dbReference type="FunFam" id="3.10.290.10:FF:000001">
    <property type="entry name" value="30S ribosomal protein S4"/>
    <property type="match status" value="1"/>
</dbReference>
<dbReference type="Gene3D" id="1.10.1050.10">
    <property type="entry name" value="Ribosomal Protein S4 Delta 41, Chain A, domain 1"/>
    <property type="match status" value="1"/>
</dbReference>
<dbReference type="Gene3D" id="3.10.290.10">
    <property type="entry name" value="RNA-binding S4 domain"/>
    <property type="match status" value="1"/>
</dbReference>
<dbReference type="HAMAP" id="MF_01306_B">
    <property type="entry name" value="Ribosomal_uS4_B"/>
    <property type="match status" value="1"/>
</dbReference>
<dbReference type="InterPro" id="IPR022801">
    <property type="entry name" value="Ribosomal_uS4"/>
</dbReference>
<dbReference type="InterPro" id="IPR005709">
    <property type="entry name" value="Ribosomal_uS4_bac-type"/>
</dbReference>
<dbReference type="InterPro" id="IPR018079">
    <property type="entry name" value="Ribosomal_uS4_CS"/>
</dbReference>
<dbReference type="InterPro" id="IPR001912">
    <property type="entry name" value="Ribosomal_uS4_N"/>
</dbReference>
<dbReference type="InterPro" id="IPR002942">
    <property type="entry name" value="S4_RNA-bd"/>
</dbReference>
<dbReference type="InterPro" id="IPR036986">
    <property type="entry name" value="S4_RNA-bd_sf"/>
</dbReference>
<dbReference type="NCBIfam" id="NF003717">
    <property type="entry name" value="PRK05327.1"/>
    <property type="match status" value="1"/>
</dbReference>
<dbReference type="NCBIfam" id="TIGR01017">
    <property type="entry name" value="rpsD_bact"/>
    <property type="match status" value="1"/>
</dbReference>
<dbReference type="PANTHER" id="PTHR11831">
    <property type="entry name" value="30S 40S RIBOSOMAL PROTEIN"/>
    <property type="match status" value="1"/>
</dbReference>
<dbReference type="PANTHER" id="PTHR11831:SF4">
    <property type="entry name" value="SMALL RIBOSOMAL SUBUNIT PROTEIN US4M"/>
    <property type="match status" value="1"/>
</dbReference>
<dbReference type="Pfam" id="PF00163">
    <property type="entry name" value="Ribosomal_S4"/>
    <property type="match status" value="1"/>
</dbReference>
<dbReference type="Pfam" id="PF01479">
    <property type="entry name" value="S4"/>
    <property type="match status" value="1"/>
</dbReference>
<dbReference type="SMART" id="SM01390">
    <property type="entry name" value="Ribosomal_S4"/>
    <property type="match status" value="1"/>
</dbReference>
<dbReference type="SMART" id="SM00363">
    <property type="entry name" value="S4"/>
    <property type="match status" value="1"/>
</dbReference>
<dbReference type="SUPFAM" id="SSF55174">
    <property type="entry name" value="Alpha-L RNA-binding motif"/>
    <property type="match status" value="1"/>
</dbReference>
<dbReference type="PROSITE" id="PS00632">
    <property type="entry name" value="RIBOSOMAL_S4"/>
    <property type="match status" value="1"/>
</dbReference>
<dbReference type="PROSITE" id="PS50889">
    <property type="entry name" value="S4"/>
    <property type="match status" value="1"/>
</dbReference>
<evidence type="ECO:0000255" key="1">
    <source>
        <dbReference type="HAMAP-Rule" id="MF_01306"/>
    </source>
</evidence>
<evidence type="ECO:0000305" key="2"/>
<sequence>MARYTGPVTRKSRRLRTDLVGGDQAFEKRPYPPGQHGRARIKESEYLLQLQEKQKARFTYGVMEKQFRRYYEEAVRQPGKTGEELLRILESRLDNVVYRAGLARTRRMARQLVTHGHFTVNGVRVDVPSYRVSQYDIIDVREQSLNSVPFQIARETAGDRPVPSWLQVVGERQRILIHQLPERAQIDVPLTEQLIVEFYSK</sequence>
<name>RS4_MYCPA</name>